<sequence>MSKIRVLCVDDSALMRQLMTEIINSHPDMEMVAAAQDPLVARDLIKKFNPQVLTLDVEMPRMDGLDFLEKLMRLRPMPVVMVSSLTGKNSEITMRALELGAIDFVTKPQLGIREGMLAYSELIADKIRTAAKARLPQRVLENKPAMLSHTPLLSSEKLIAIGASTGGTEAIRAVLQPLPPTSPALLITQHMPPGFTRSFAERLNKLCQITVKEAEDGERVLPGHAYIAPGDRHLELARSGANYQVRIHDGPAVNRHRPSVDVLFRSVAQYAGRNAVGVILTGMGNDGAAGLLEMHRAGAYTLAQNEASCVVFGMPREAIAMGGVNDVVELNQISQRMLAQISSGQALRI</sequence>
<name>CHEB_YERPA</name>
<gene>
    <name evidence="1" type="primary">cheB</name>
    <name type="ordered locus">YPA_1843</name>
</gene>
<accession>Q1C6W3</accession>
<comment type="function">
    <text evidence="1">Involved in chemotaxis. Part of a chemotaxis signal transduction system that modulates chemotaxis in response to various stimuli. Catalyzes the demethylation of specific methylglutamate residues introduced into the chemoreceptors (methyl-accepting chemotaxis proteins or MCP) by CheR. Also mediates the irreversible deamidation of specific glutamine residues to glutamic acid.</text>
</comment>
<comment type="catalytic activity">
    <reaction evidence="1">
        <text>[protein]-L-glutamate 5-O-methyl ester + H2O = L-glutamyl-[protein] + methanol + H(+)</text>
        <dbReference type="Rhea" id="RHEA:23236"/>
        <dbReference type="Rhea" id="RHEA-COMP:10208"/>
        <dbReference type="Rhea" id="RHEA-COMP:10311"/>
        <dbReference type="ChEBI" id="CHEBI:15377"/>
        <dbReference type="ChEBI" id="CHEBI:15378"/>
        <dbReference type="ChEBI" id="CHEBI:17790"/>
        <dbReference type="ChEBI" id="CHEBI:29973"/>
        <dbReference type="ChEBI" id="CHEBI:82795"/>
        <dbReference type="EC" id="3.1.1.61"/>
    </reaction>
</comment>
<comment type="catalytic activity">
    <reaction evidence="1">
        <text>L-glutaminyl-[protein] + H2O = L-glutamyl-[protein] + NH4(+)</text>
        <dbReference type="Rhea" id="RHEA:16441"/>
        <dbReference type="Rhea" id="RHEA-COMP:10207"/>
        <dbReference type="Rhea" id="RHEA-COMP:10208"/>
        <dbReference type="ChEBI" id="CHEBI:15377"/>
        <dbReference type="ChEBI" id="CHEBI:28938"/>
        <dbReference type="ChEBI" id="CHEBI:29973"/>
        <dbReference type="ChEBI" id="CHEBI:30011"/>
        <dbReference type="EC" id="3.5.1.44"/>
    </reaction>
</comment>
<comment type="subcellular location">
    <subcellularLocation>
        <location evidence="1">Cytoplasm</location>
    </subcellularLocation>
</comment>
<comment type="domain">
    <text evidence="1">Contains a C-terminal catalytic domain, and an N-terminal region which modulates catalytic activity.</text>
</comment>
<comment type="PTM">
    <text evidence="1">Phosphorylated by CheA. Phosphorylation of the N-terminal regulatory domain activates the methylesterase activity.</text>
</comment>
<comment type="similarity">
    <text evidence="1">Belongs to the CheB family.</text>
</comment>
<reference key="1">
    <citation type="journal article" date="2006" name="J. Bacteriol.">
        <title>Complete genome sequence of Yersinia pestis strains Antiqua and Nepal516: evidence of gene reduction in an emerging pathogen.</title>
        <authorList>
            <person name="Chain P.S.G."/>
            <person name="Hu P."/>
            <person name="Malfatti S.A."/>
            <person name="Radnedge L."/>
            <person name="Larimer F."/>
            <person name="Vergez L.M."/>
            <person name="Worsham P."/>
            <person name="Chu M.C."/>
            <person name="Andersen G.L."/>
        </authorList>
    </citation>
    <scope>NUCLEOTIDE SEQUENCE [LARGE SCALE GENOMIC DNA]</scope>
    <source>
        <strain>Antiqua</strain>
    </source>
</reference>
<protein>
    <recommendedName>
        <fullName evidence="1">Protein-glutamate methylesterase/protein-glutamine glutaminase</fullName>
        <ecNumber evidence="1">3.1.1.61</ecNumber>
        <ecNumber evidence="1">3.5.1.44</ecNumber>
    </recommendedName>
</protein>
<organism>
    <name type="scientific">Yersinia pestis bv. Antiqua (strain Antiqua)</name>
    <dbReference type="NCBI Taxonomy" id="360102"/>
    <lineage>
        <taxon>Bacteria</taxon>
        <taxon>Pseudomonadati</taxon>
        <taxon>Pseudomonadota</taxon>
        <taxon>Gammaproteobacteria</taxon>
        <taxon>Enterobacterales</taxon>
        <taxon>Yersiniaceae</taxon>
        <taxon>Yersinia</taxon>
    </lineage>
</organism>
<keyword id="KW-0145">Chemotaxis</keyword>
<keyword id="KW-0963">Cytoplasm</keyword>
<keyword id="KW-0378">Hydrolase</keyword>
<keyword id="KW-0597">Phosphoprotein</keyword>
<dbReference type="EC" id="3.1.1.61" evidence="1"/>
<dbReference type="EC" id="3.5.1.44" evidence="1"/>
<dbReference type="EMBL" id="CP000308">
    <property type="protein sequence ID" value="ABG13809.1"/>
    <property type="molecule type" value="Genomic_DNA"/>
</dbReference>
<dbReference type="RefSeq" id="WP_002210874.1">
    <property type="nucleotide sequence ID" value="NZ_CP009906.1"/>
</dbReference>
<dbReference type="SMR" id="Q1C6W3"/>
<dbReference type="KEGG" id="ypa:YPA_1843"/>
<dbReference type="Proteomes" id="UP000001971">
    <property type="component" value="Chromosome"/>
</dbReference>
<dbReference type="GO" id="GO:0005737">
    <property type="term" value="C:cytoplasm"/>
    <property type="evidence" value="ECO:0007669"/>
    <property type="project" value="UniProtKB-SubCell"/>
</dbReference>
<dbReference type="GO" id="GO:0000156">
    <property type="term" value="F:phosphorelay response regulator activity"/>
    <property type="evidence" value="ECO:0007669"/>
    <property type="project" value="InterPro"/>
</dbReference>
<dbReference type="GO" id="GO:0008984">
    <property type="term" value="F:protein-glutamate methylesterase activity"/>
    <property type="evidence" value="ECO:0007669"/>
    <property type="project" value="UniProtKB-UniRule"/>
</dbReference>
<dbReference type="GO" id="GO:0050568">
    <property type="term" value="F:protein-glutamine glutaminase activity"/>
    <property type="evidence" value="ECO:0007669"/>
    <property type="project" value="UniProtKB-UniRule"/>
</dbReference>
<dbReference type="GO" id="GO:0006935">
    <property type="term" value="P:chemotaxis"/>
    <property type="evidence" value="ECO:0007669"/>
    <property type="project" value="UniProtKB-UniRule"/>
</dbReference>
<dbReference type="CDD" id="cd16432">
    <property type="entry name" value="CheB_Rec"/>
    <property type="match status" value="1"/>
</dbReference>
<dbReference type="CDD" id="cd17541">
    <property type="entry name" value="REC_CheB-like"/>
    <property type="match status" value="1"/>
</dbReference>
<dbReference type="FunFam" id="3.40.50.180:FF:000001">
    <property type="entry name" value="Protein-glutamate methylesterase/protein-glutamine glutaminase"/>
    <property type="match status" value="1"/>
</dbReference>
<dbReference type="FunFam" id="3.40.50.2300:FF:000060">
    <property type="entry name" value="Protein-glutamate methylesterase/protein-glutamine glutaminase"/>
    <property type="match status" value="1"/>
</dbReference>
<dbReference type="Gene3D" id="3.40.50.2300">
    <property type="match status" value="1"/>
</dbReference>
<dbReference type="Gene3D" id="3.40.50.180">
    <property type="entry name" value="Methylesterase CheB, C-terminal domain"/>
    <property type="match status" value="1"/>
</dbReference>
<dbReference type="HAMAP" id="MF_00099">
    <property type="entry name" value="CheB_chemtxs"/>
    <property type="match status" value="1"/>
</dbReference>
<dbReference type="InterPro" id="IPR008248">
    <property type="entry name" value="CheB-like"/>
</dbReference>
<dbReference type="InterPro" id="IPR035909">
    <property type="entry name" value="CheB_C"/>
</dbReference>
<dbReference type="InterPro" id="IPR011006">
    <property type="entry name" value="CheY-like_superfamily"/>
</dbReference>
<dbReference type="InterPro" id="IPR000673">
    <property type="entry name" value="Sig_transdc_resp-reg_Me-estase"/>
</dbReference>
<dbReference type="InterPro" id="IPR001789">
    <property type="entry name" value="Sig_transdc_resp-reg_receiver"/>
</dbReference>
<dbReference type="NCBIfam" id="NF001965">
    <property type="entry name" value="PRK00742.1"/>
    <property type="match status" value="1"/>
</dbReference>
<dbReference type="NCBIfam" id="NF009206">
    <property type="entry name" value="PRK12555.1"/>
    <property type="match status" value="1"/>
</dbReference>
<dbReference type="PANTHER" id="PTHR42872">
    <property type="entry name" value="PROTEIN-GLUTAMATE METHYLESTERASE/PROTEIN-GLUTAMINE GLUTAMINASE"/>
    <property type="match status" value="1"/>
</dbReference>
<dbReference type="PANTHER" id="PTHR42872:SF6">
    <property type="entry name" value="PROTEIN-GLUTAMATE METHYLESTERASE_PROTEIN-GLUTAMINE GLUTAMINASE"/>
    <property type="match status" value="1"/>
</dbReference>
<dbReference type="Pfam" id="PF01339">
    <property type="entry name" value="CheB_methylest"/>
    <property type="match status" value="1"/>
</dbReference>
<dbReference type="Pfam" id="PF00072">
    <property type="entry name" value="Response_reg"/>
    <property type="match status" value="1"/>
</dbReference>
<dbReference type="PIRSF" id="PIRSF000876">
    <property type="entry name" value="RR_chemtxs_CheB"/>
    <property type="match status" value="1"/>
</dbReference>
<dbReference type="SMART" id="SM00448">
    <property type="entry name" value="REC"/>
    <property type="match status" value="1"/>
</dbReference>
<dbReference type="SUPFAM" id="SSF52172">
    <property type="entry name" value="CheY-like"/>
    <property type="match status" value="1"/>
</dbReference>
<dbReference type="SUPFAM" id="SSF52738">
    <property type="entry name" value="Methylesterase CheB, C-terminal domain"/>
    <property type="match status" value="1"/>
</dbReference>
<dbReference type="PROSITE" id="PS50122">
    <property type="entry name" value="CHEB"/>
    <property type="match status" value="1"/>
</dbReference>
<dbReference type="PROSITE" id="PS50110">
    <property type="entry name" value="RESPONSE_REGULATORY"/>
    <property type="match status" value="1"/>
</dbReference>
<proteinExistence type="inferred from homology"/>
<feature type="chain" id="PRO_0000264335" description="Protein-glutamate methylesterase/protein-glutamine glutaminase">
    <location>
        <begin position="1"/>
        <end position="349"/>
    </location>
</feature>
<feature type="domain" description="Response regulatory" evidence="1">
    <location>
        <begin position="5"/>
        <end position="122"/>
    </location>
</feature>
<feature type="domain" description="CheB-type methylesterase" evidence="1">
    <location>
        <begin position="152"/>
        <end position="344"/>
    </location>
</feature>
<feature type="active site" evidence="1">
    <location>
        <position position="164"/>
    </location>
</feature>
<feature type="active site" evidence="1">
    <location>
        <position position="190"/>
    </location>
</feature>
<feature type="active site" evidence="1">
    <location>
        <position position="286"/>
    </location>
</feature>
<feature type="modified residue" description="4-aspartylphosphate" evidence="1">
    <location>
        <position position="56"/>
    </location>
</feature>
<evidence type="ECO:0000255" key="1">
    <source>
        <dbReference type="HAMAP-Rule" id="MF_00099"/>
    </source>
</evidence>